<dbReference type="EC" id="2.1.2.1" evidence="3"/>
<dbReference type="EMBL" id="X80024">
    <property type="protein sequence ID" value="CAA56326.1"/>
    <property type="molecule type" value="mRNA"/>
</dbReference>
<dbReference type="PIR" id="S65688">
    <property type="entry name" value="A40202"/>
</dbReference>
<dbReference type="RefSeq" id="NP_001009469.1">
    <property type="nucleotide sequence ID" value="NM_001009469.1"/>
</dbReference>
<dbReference type="RefSeq" id="XP_027829756.1">
    <property type="nucleotide sequence ID" value="XM_027973955.2"/>
</dbReference>
<dbReference type="RefSeq" id="XP_027829757.1">
    <property type="nucleotide sequence ID" value="XM_027973956.2"/>
</dbReference>
<dbReference type="SMR" id="P35623"/>
<dbReference type="STRING" id="9940.ENSOARP00000019916"/>
<dbReference type="PaxDb" id="9940-ENSOARP00000019916"/>
<dbReference type="Ensembl" id="ENSOART00180047629">
    <property type="protein sequence ID" value="ENSOARP00180024059"/>
    <property type="gene ID" value="ENSOARG00180028918"/>
</dbReference>
<dbReference type="Ensembl" id="ENSOART00215037127">
    <property type="protein sequence ID" value="ENSOARP00215019287"/>
    <property type="gene ID" value="ENSOARG00215022279"/>
</dbReference>
<dbReference type="Ensembl" id="ENSOART00220041625">
    <property type="protein sequence ID" value="ENSOARP00220022358"/>
    <property type="gene ID" value="ENSOARG00220024994"/>
</dbReference>
<dbReference type="GeneID" id="443544"/>
<dbReference type="KEGG" id="oas:443544"/>
<dbReference type="CTD" id="6470"/>
<dbReference type="eggNOG" id="KOG2467">
    <property type="taxonomic scope" value="Eukaryota"/>
</dbReference>
<dbReference type="OrthoDB" id="10265628at2759"/>
<dbReference type="SABIO-RK" id="P35623"/>
<dbReference type="UniPathway" id="UPA00193"/>
<dbReference type="Proteomes" id="UP000002356">
    <property type="component" value="Unplaced"/>
</dbReference>
<dbReference type="GO" id="GO:0005829">
    <property type="term" value="C:cytosol"/>
    <property type="evidence" value="ECO:0000250"/>
    <property type="project" value="UniProtKB"/>
</dbReference>
<dbReference type="GO" id="GO:0005739">
    <property type="term" value="C:mitochondrion"/>
    <property type="evidence" value="ECO:0007669"/>
    <property type="project" value="TreeGrafter"/>
</dbReference>
<dbReference type="GO" id="GO:0005654">
    <property type="term" value="C:nucleoplasm"/>
    <property type="evidence" value="ECO:0007669"/>
    <property type="project" value="Ensembl"/>
</dbReference>
<dbReference type="GO" id="GO:0004372">
    <property type="term" value="F:glycine hydroxymethyltransferase activity"/>
    <property type="evidence" value="ECO:0000250"/>
    <property type="project" value="UniProtKB"/>
</dbReference>
<dbReference type="GO" id="GO:0048027">
    <property type="term" value="F:mRNA 5'-UTR binding"/>
    <property type="evidence" value="ECO:0007669"/>
    <property type="project" value="Ensembl"/>
</dbReference>
<dbReference type="GO" id="GO:0000900">
    <property type="term" value="F:mRNA regulatory element binding translation repressor activity"/>
    <property type="evidence" value="ECO:0007669"/>
    <property type="project" value="Ensembl"/>
</dbReference>
<dbReference type="GO" id="GO:0042803">
    <property type="term" value="F:protein homodimerization activity"/>
    <property type="evidence" value="ECO:0007669"/>
    <property type="project" value="Ensembl"/>
</dbReference>
<dbReference type="GO" id="GO:0030170">
    <property type="term" value="F:pyridoxal phosphate binding"/>
    <property type="evidence" value="ECO:0000250"/>
    <property type="project" value="UniProtKB"/>
</dbReference>
<dbReference type="GO" id="GO:0070905">
    <property type="term" value="F:serine binding"/>
    <property type="evidence" value="ECO:0007669"/>
    <property type="project" value="Ensembl"/>
</dbReference>
<dbReference type="GO" id="GO:1904482">
    <property type="term" value="P:cellular response to tetrahydrofolate"/>
    <property type="evidence" value="ECO:0007669"/>
    <property type="project" value="Ensembl"/>
</dbReference>
<dbReference type="GO" id="GO:0046655">
    <property type="term" value="P:folic acid metabolic process"/>
    <property type="evidence" value="ECO:0007669"/>
    <property type="project" value="Ensembl"/>
</dbReference>
<dbReference type="GO" id="GO:0019264">
    <property type="term" value="P:glycine biosynthetic process from serine"/>
    <property type="evidence" value="ECO:0007669"/>
    <property type="project" value="InterPro"/>
</dbReference>
<dbReference type="GO" id="GO:0006544">
    <property type="term" value="P:glycine metabolic process"/>
    <property type="evidence" value="ECO:0000250"/>
    <property type="project" value="UniProtKB"/>
</dbReference>
<dbReference type="GO" id="GO:0006565">
    <property type="term" value="P:L-serine catabolic process"/>
    <property type="evidence" value="ECO:0007669"/>
    <property type="project" value="Ensembl"/>
</dbReference>
<dbReference type="GO" id="GO:0006563">
    <property type="term" value="P:L-serine metabolic process"/>
    <property type="evidence" value="ECO:0000250"/>
    <property type="project" value="UniProtKB"/>
</dbReference>
<dbReference type="GO" id="GO:0051289">
    <property type="term" value="P:protein homotetramerization"/>
    <property type="evidence" value="ECO:0000250"/>
    <property type="project" value="UniProtKB"/>
</dbReference>
<dbReference type="GO" id="GO:0009113">
    <property type="term" value="P:purine nucleobase biosynthetic process"/>
    <property type="evidence" value="ECO:0007669"/>
    <property type="project" value="Ensembl"/>
</dbReference>
<dbReference type="GO" id="GO:0035999">
    <property type="term" value="P:tetrahydrofolate interconversion"/>
    <property type="evidence" value="ECO:0007669"/>
    <property type="project" value="UniProtKB-UniPathway"/>
</dbReference>
<dbReference type="GO" id="GO:0046653">
    <property type="term" value="P:tetrahydrofolate metabolic process"/>
    <property type="evidence" value="ECO:0000250"/>
    <property type="project" value="UniProtKB"/>
</dbReference>
<dbReference type="CDD" id="cd00378">
    <property type="entry name" value="SHMT"/>
    <property type="match status" value="1"/>
</dbReference>
<dbReference type="FunFam" id="3.40.640.10:FF:000097">
    <property type="entry name" value="Serine hydroxymethyltransferase"/>
    <property type="match status" value="1"/>
</dbReference>
<dbReference type="FunFam" id="3.90.1150.10:FF:000005">
    <property type="entry name" value="Serine hydroxymethyltransferase"/>
    <property type="match status" value="1"/>
</dbReference>
<dbReference type="FunFam" id="3.90.1150.10:FF:000048">
    <property type="entry name" value="Serine hydroxymethyltransferase, mitochondrial"/>
    <property type="match status" value="1"/>
</dbReference>
<dbReference type="Gene3D" id="3.90.1150.10">
    <property type="entry name" value="Aspartate Aminotransferase, domain 1"/>
    <property type="match status" value="1"/>
</dbReference>
<dbReference type="Gene3D" id="3.40.640.10">
    <property type="entry name" value="Type I PLP-dependent aspartate aminotransferase-like (Major domain)"/>
    <property type="match status" value="1"/>
</dbReference>
<dbReference type="HAMAP" id="MF_00051">
    <property type="entry name" value="SHMT"/>
    <property type="match status" value="1"/>
</dbReference>
<dbReference type="InterPro" id="IPR015424">
    <property type="entry name" value="PyrdxlP-dep_Trfase"/>
</dbReference>
<dbReference type="InterPro" id="IPR015421">
    <property type="entry name" value="PyrdxlP-dep_Trfase_major"/>
</dbReference>
<dbReference type="InterPro" id="IPR015422">
    <property type="entry name" value="PyrdxlP-dep_Trfase_small"/>
</dbReference>
<dbReference type="InterPro" id="IPR001085">
    <property type="entry name" value="Ser_HO-MeTrfase"/>
</dbReference>
<dbReference type="InterPro" id="IPR049943">
    <property type="entry name" value="Ser_HO-MeTrfase-like"/>
</dbReference>
<dbReference type="InterPro" id="IPR019798">
    <property type="entry name" value="Ser_HO-MeTrfase_PLP_BS"/>
</dbReference>
<dbReference type="InterPro" id="IPR039429">
    <property type="entry name" value="SHMT-like_dom"/>
</dbReference>
<dbReference type="NCBIfam" id="NF000586">
    <property type="entry name" value="PRK00011.1"/>
    <property type="match status" value="1"/>
</dbReference>
<dbReference type="PANTHER" id="PTHR11680">
    <property type="entry name" value="SERINE HYDROXYMETHYLTRANSFERASE"/>
    <property type="match status" value="1"/>
</dbReference>
<dbReference type="PANTHER" id="PTHR11680:SF59">
    <property type="entry name" value="SERINE HYDROXYMETHYLTRANSFERASE, CYTOSOLIC"/>
    <property type="match status" value="1"/>
</dbReference>
<dbReference type="Pfam" id="PF00464">
    <property type="entry name" value="SHMT"/>
    <property type="match status" value="1"/>
</dbReference>
<dbReference type="PIRSF" id="PIRSF000412">
    <property type="entry name" value="SHMT"/>
    <property type="match status" value="1"/>
</dbReference>
<dbReference type="SUPFAM" id="SSF53383">
    <property type="entry name" value="PLP-dependent transferases"/>
    <property type="match status" value="1"/>
</dbReference>
<dbReference type="PROSITE" id="PS00096">
    <property type="entry name" value="SHMT"/>
    <property type="match status" value="1"/>
</dbReference>
<sequence length="484" mass="53025">MAAPVNKAPRDADLWSLHEKMLAQPLKDNDVEVYNIIKKESNRQRVGLELIASENFASRAVLEALGSCLNNKYSEGYPGQRYYGGTEFIDELEVLCQKRALQVYGLDPECWGVNVQPYSGSPANFAVYTALVEPHGRIMGLDLPDGGHLTHGFMTDKKKISATSIFFESMPYKVNPDTGYINYDQLEENARLFHPRLIIAGTSCYSRNLDYARLRKIADDNGAYLMADMAHISGLVAAGVVPSPFEHCHVVSTTTHKTLRGCRAGMIFYRKGVRSVDPKTGKETRYNLESLINSAVFPGLQGGPHNHAIAGVAVALKQAMTPEFRAYQRQVVANCRALAEALMGLGYRVVTGGSDNHLILVDLRSKGTDGGRAEKVLEACSIACNKNTCPGDKSALRPSGLRLGTPALTSRGLLEEDFRKVAHFIHRGIELTLQIQDAVGVKATLKEFMEKLAGAEEHQRAVTALRAEVESFATLFPLPGLPGF</sequence>
<comment type="function">
    <text evidence="3">Interconversion of serine and glycine.</text>
</comment>
<comment type="catalytic activity">
    <reaction evidence="3">
        <text>(6R)-5,10-methylene-5,6,7,8-tetrahydrofolate + glycine + H2O = (6S)-5,6,7,8-tetrahydrofolate + L-serine</text>
        <dbReference type="Rhea" id="RHEA:15481"/>
        <dbReference type="ChEBI" id="CHEBI:15377"/>
        <dbReference type="ChEBI" id="CHEBI:15636"/>
        <dbReference type="ChEBI" id="CHEBI:33384"/>
        <dbReference type="ChEBI" id="CHEBI:57305"/>
        <dbReference type="ChEBI" id="CHEBI:57453"/>
        <dbReference type="EC" id="2.1.2.1"/>
    </reaction>
</comment>
<comment type="cofactor">
    <cofactor evidence="5">
        <name>pyridoxal 5'-phosphate</name>
        <dbReference type="ChEBI" id="CHEBI:597326"/>
    </cofactor>
</comment>
<comment type="pathway">
    <text evidence="6">One-carbon metabolism; tetrahydrofolate interconversion.</text>
</comment>
<comment type="subunit">
    <text evidence="2 3">Homotetramer (PubMed:7607226). Identified in complex with ABRAXAS2 and the other subunits of the BRISC complex, at least composed of ABRAXAS2, BRCC3/BRCC36, BABAM2 and BABAM1/NBA1.</text>
</comment>
<comment type="subcellular location">
    <subcellularLocation>
        <location>Cytoplasm</location>
    </subcellularLocation>
</comment>
<comment type="miscellaneous">
    <text evidence="6">In eukaryotes there are two forms of the enzymes: a cytosolic one and a mitochondrial one.</text>
</comment>
<comment type="similarity">
    <text evidence="6">Belongs to the SHMT family.</text>
</comment>
<accession>P35623</accession>
<organism>
    <name type="scientific">Ovis aries</name>
    <name type="common">Sheep</name>
    <dbReference type="NCBI Taxonomy" id="9940"/>
    <lineage>
        <taxon>Eukaryota</taxon>
        <taxon>Metazoa</taxon>
        <taxon>Chordata</taxon>
        <taxon>Craniata</taxon>
        <taxon>Vertebrata</taxon>
        <taxon>Euteleostomi</taxon>
        <taxon>Mammalia</taxon>
        <taxon>Eutheria</taxon>
        <taxon>Laurasiatheria</taxon>
        <taxon>Artiodactyla</taxon>
        <taxon>Ruminantia</taxon>
        <taxon>Pecora</taxon>
        <taxon>Bovidae</taxon>
        <taxon>Caprinae</taxon>
        <taxon>Ovis</taxon>
    </lineage>
</organism>
<name>GLYC_SHEEP</name>
<evidence type="ECO:0000250" key="1">
    <source>
        <dbReference type="UniProtKB" id="P07511"/>
    </source>
</evidence>
<evidence type="ECO:0000250" key="2">
    <source>
        <dbReference type="UniProtKB" id="P34896"/>
    </source>
</evidence>
<evidence type="ECO:0000269" key="3">
    <source>
    </source>
</evidence>
<evidence type="ECO:0000269" key="4">
    <source>
    </source>
</evidence>
<evidence type="ECO:0000269" key="5">
    <source ref="2"/>
</evidence>
<evidence type="ECO:0000305" key="6"/>
<keyword id="KW-0007">Acetylation</keyword>
<keyword id="KW-0963">Cytoplasm</keyword>
<keyword id="KW-0903">Direct protein sequencing</keyword>
<keyword id="KW-0554">One-carbon metabolism</keyword>
<keyword id="KW-0663">Pyridoxal phosphate</keyword>
<keyword id="KW-1185">Reference proteome</keyword>
<keyword id="KW-0808">Transferase</keyword>
<gene>
    <name type="primary">SHMT1</name>
</gene>
<feature type="initiator methionine" description="Removed" evidence="1 3 4">
    <location>
        <position position="1"/>
    </location>
</feature>
<feature type="chain" id="PRO_0000113507" description="Serine hydroxymethyltransferase, cytosolic">
    <location>
        <begin position="2"/>
        <end position="484"/>
    </location>
</feature>
<feature type="modified residue" description="N-acetylalanine" evidence="1">
    <location>
        <position position="2"/>
    </location>
</feature>
<feature type="modified residue" description="N6-(pyridoxal phosphate)lysine" evidence="2">
    <location>
        <position position="257"/>
    </location>
</feature>
<feature type="sequence variant">
    <original>E</original>
    <variation>V</variation>
    <location>
        <position position="468"/>
    </location>
</feature>
<feature type="sequence variant">
    <original>T</original>
    <variation>A</variation>
    <location>
        <position position="474"/>
    </location>
</feature>
<proteinExistence type="evidence at protein level"/>
<reference key="1">
    <citation type="journal article" date="1995" name="Eur. J. Biochem.">
        <title>cDNA cloning, overexpression in Escherichia coli, purification and characterization of sheep liver cytosolic serine hydroxymethyltransferase.</title>
        <authorList>
            <person name="Jagath-Reddy J."/>
            <person name="Ganesan K."/>
            <person name="Savithri H.S."/>
            <person name="Datta A."/>
            <person name="Rao N.A."/>
        </authorList>
    </citation>
    <scope>NUCLEOTIDE SEQUENCE [MRNA]</scope>
    <scope>PROTEIN SEQUENCE OF 2-15</scope>
    <scope>SEQUENCE REVISION</scope>
    <scope>CATALYTIC ACTIVITY</scope>
    <scope>FUNCTION</scope>
    <scope>SUBUNIT</scope>
    <source>
        <tissue>Liver</tissue>
    </source>
</reference>
<reference key="2">
    <citation type="submission" date="1997-09" db="EMBL/GenBank/DDBJ databases">
        <authorList>
            <person name="Rao N.A."/>
        </authorList>
    </citation>
    <scope>SEQUENCE REVISION</scope>
</reference>
<reference key="3">
    <citation type="journal article" date="1994" name="Biochim. Biophys. Acta">
        <title>The primary structure of sheep liver cytosolic serine hydroxymethyltransferase and an analysis of the evolutionary relationships among serine hydroxymethyltransferases.</title>
        <authorList>
            <person name="Usha R."/>
            <person name="Savithri H.S."/>
            <person name="Rao N.A."/>
        </authorList>
    </citation>
    <scope>PROTEIN SEQUENCE OF 2-484</scope>
    <scope>COFACTOR</scope>
    <source>
        <tissue>Liver</tissue>
    </source>
</reference>
<protein>
    <recommendedName>
        <fullName>Serine hydroxymethyltransferase, cytosolic</fullName>
        <shortName>SHMT</shortName>
        <ecNumber evidence="3">2.1.2.1</ecNumber>
    </recommendedName>
    <alternativeName>
        <fullName>Glycine hydroxymethyltransferase</fullName>
    </alternativeName>
    <alternativeName>
        <fullName>Serine methylase</fullName>
    </alternativeName>
</protein>